<name>PTUA_BACMK</name>
<evidence type="ECO:0000269" key="1">
    <source>
    </source>
</evidence>
<evidence type="ECO:0000303" key="2">
    <source>
    </source>
</evidence>
<evidence type="ECO:0000305" key="3">
    <source>
    </source>
</evidence>
<evidence type="ECO:0000312" key="4">
    <source>
        <dbReference type="EMBL" id="ABY44616.1"/>
    </source>
</evidence>
<dbReference type="EMBL" id="CP000903">
    <property type="protein sequence ID" value="ABY44616.1"/>
    <property type="molecule type" value="Genomic_DNA"/>
</dbReference>
<dbReference type="RefSeq" id="WP_012261490.1">
    <property type="nucleotide sequence ID" value="NC_010184.1"/>
</dbReference>
<dbReference type="KEGG" id="bwe:BcerKBAB4_3443"/>
<dbReference type="eggNOG" id="COG3950">
    <property type="taxonomic scope" value="Bacteria"/>
</dbReference>
<dbReference type="HOGENOM" id="CLU_021090_0_0_9"/>
<dbReference type="Proteomes" id="UP000002154">
    <property type="component" value="Chromosome"/>
</dbReference>
<dbReference type="GO" id="GO:0005524">
    <property type="term" value="F:ATP binding"/>
    <property type="evidence" value="ECO:0007669"/>
    <property type="project" value="InterPro"/>
</dbReference>
<dbReference type="GO" id="GO:0016887">
    <property type="term" value="F:ATP hydrolysis activity"/>
    <property type="evidence" value="ECO:0007669"/>
    <property type="project" value="InterPro"/>
</dbReference>
<dbReference type="GO" id="GO:0051607">
    <property type="term" value="P:defense response to virus"/>
    <property type="evidence" value="ECO:0007669"/>
    <property type="project" value="UniProtKB-KW"/>
</dbReference>
<dbReference type="Gene3D" id="1.10.30.50">
    <property type="match status" value="1"/>
</dbReference>
<dbReference type="Gene3D" id="3.40.50.300">
    <property type="entry name" value="P-loop containing nucleotide triphosphate hydrolases"/>
    <property type="match status" value="1"/>
</dbReference>
<dbReference type="InterPro" id="IPR003593">
    <property type="entry name" value="AAA+_ATPase"/>
</dbReference>
<dbReference type="InterPro" id="IPR003959">
    <property type="entry name" value="ATPase_AAA_core"/>
</dbReference>
<dbReference type="InterPro" id="IPR051396">
    <property type="entry name" value="Bact_Antivir_Def_Nuclease"/>
</dbReference>
<dbReference type="InterPro" id="IPR027417">
    <property type="entry name" value="P-loop_NTPase"/>
</dbReference>
<dbReference type="PANTHER" id="PTHR43581">
    <property type="entry name" value="ATP/GTP PHOSPHATASE"/>
    <property type="match status" value="1"/>
</dbReference>
<dbReference type="PANTHER" id="PTHR43581:SF2">
    <property type="entry name" value="EXCINUCLEASE ATPASE SUBUNIT"/>
    <property type="match status" value="1"/>
</dbReference>
<dbReference type="Pfam" id="PF13304">
    <property type="entry name" value="AAA_21"/>
    <property type="match status" value="1"/>
</dbReference>
<dbReference type="SMART" id="SM00382">
    <property type="entry name" value="AAA"/>
    <property type="match status" value="1"/>
</dbReference>
<dbReference type="SUPFAM" id="SSF52540">
    <property type="entry name" value="P-loop containing nucleoside triphosphate hydrolases"/>
    <property type="match status" value="1"/>
</dbReference>
<gene>
    <name evidence="2" type="primary">ptuA</name>
    <name evidence="4" type="ordered locus">BcerKBAB4_3443</name>
</gene>
<reference evidence="4" key="1">
    <citation type="journal article" date="2008" name="Chem. Biol. Interact.">
        <title>Extending the Bacillus cereus group genomics to putative food-borne pathogens of different toxicity.</title>
        <authorList>
            <person name="Lapidus A."/>
            <person name="Goltsman E."/>
            <person name="Auger S."/>
            <person name="Galleron N."/>
            <person name="Segurens B."/>
            <person name="Dossat C."/>
            <person name="Land M.L."/>
            <person name="Broussolle V."/>
            <person name="Brillard J."/>
            <person name="Guinebretiere M.-H."/>
            <person name="Sanchis V."/>
            <person name="Nguen-the C."/>
            <person name="Lereclus D."/>
            <person name="Richardson P."/>
            <person name="Wincker P."/>
            <person name="Weissenbach J."/>
            <person name="Ehrlich S.D."/>
            <person name="Sorokin A."/>
        </authorList>
    </citation>
    <scope>NUCLEOTIDE SEQUENCE [LARGE SCALE GENOMIC DNA]</scope>
    <source>
        <strain>KBAB4</strain>
    </source>
</reference>
<reference key="2">
    <citation type="journal article" date="2018" name="Science">
        <title>Systematic discovery of antiphage defense systems in the microbial pangenome.</title>
        <authorList>
            <person name="Doron S."/>
            <person name="Melamed S."/>
            <person name="Ofir G."/>
            <person name="Leavitt A."/>
            <person name="Lopatina A."/>
            <person name="Keren M."/>
            <person name="Amitai G."/>
            <person name="Sorek R."/>
        </authorList>
    </citation>
    <scope>FUNCTION</scope>
    <scope>DISRUPTION PHENOTYPE</scope>
    <scope>EXPRESSION IN B.SUBTILIS</scope>
    <source>
        <strain>KBAB4</strain>
    </source>
</reference>
<organism>
    <name type="scientific">Bacillus mycoides (strain KBAB4)</name>
    <name type="common">Bacillus weihenstephanensis</name>
    <dbReference type="NCBI Taxonomy" id="315730"/>
    <lineage>
        <taxon>Bacteria</taxon>
        <taxon>Bacillati</taxon>
        <taxon>Bacillota</taxon>
        <taxon>Bacilli</taxon>
        <taxon>Bacillales</taxon>
        <taxon>Bacillaceae</taxon>
        <taxon>Bacillus</taxon>
        <taxon>Bacillus cereus group</taxon>
    </lineage>
</organism>
<feature type="chain" id="PRO_0000456384" description="Septu protein PtuA">
    <location>
        <begin position="1"/>
        <end position="709"/>
    </location>
</feature>
<proteinExistence type="predicted"/>
<comment type="function">
    <text evidence="1 3">Component of antiviral defense system Septu type II, composed of PtuA and PtuB. Expression of Septu type II in B.subtilis (strain BEST7003) confers resistance to phages SBSphiC and SpBeta (PubMed:29371424). May be an ATPase (Probable).</text>
</comment>
<comment type="disruption phenotype">
    <text evidence="1">When this gene is missing the Septu type II system does not confer resistance to SpBeta in B.subtilis.</text>
</comment>
<keyword id="KW-0051">Antiviral defense</keyword>
<keyword id="KW-0378">Hydrolase</keyword>
<protein>
    <recommendedName>
        <fullName evidence="2">Septu protein PtuA</fullName>
    </recommendedName>
    <alternativeName>
        <fullName evidence="3">Putative ATPase PtuA</fullName>
    </alternativeName>
</protein>
<accession>A9VQW7</accession>
<sequence length="709" mass="83883">MIRIHKDKYFDSIYDELLEQATQEKYMDEYLLEKFMKRYFNGKCSYCEIRMKELRLTIDFYRPINGSLNTMDGEFHPDHYKWLKNEDDNILSICVECKRAKSNRFPVDGDVASINADKNKLVKERRLLIHPCRDYPERHFDYDESGMVYYKSKKGEVTVDVLNLNRGMLVEMRAQVYSEFNNLCYLFSMEQSPYYLKQILQEVQLDSIFIGLKKFILSEWVILNEKIPFLQEFEPLLGKRLQEEEVRVLSVRNNKISQIDIDNNILYVDNDKRRKRVPARKINDYYDVSDENALEKYYGKQRFIEKIEIYNFKSIRNMKIDFTLSKSSNAPWLMLLGENGVGKSSILQAIALTLMGNEQRQKIIKKKPYEYLTKGFDEGSIKIKLSGMQEPISIYLNSNSFEFTGENHQRPRVLILGYGSTRLLPREEMLSNYKVTWARIENLFNPFIPLVNVREYLLSLNNEDFNNVKKAIESLFLDEVIIDRDQIYEEVYFGFANSYSKLEDLSDGYQTIIALATDIMMVMKNRWRNFDAEGIVLIDEIDAHLHPRWNIEIVSRLKNAFPKIQFIATTHNPLSLRGLIDGEVAVLLENEEREAYITQKLPSQKGFNVEGLLTSKFFGLYDTMPDLNELFDRYYLLLSNPSPNERQKEEIKNLQDKLSKYEKVGTTLREQKFYEAVDYYFAQYRKNNVELSDEEFNNIIEDAIKYFER</sequence>